<protein>
    <recommendedName>
        <fullName evidence="1">Small ribosomal subunit protein uS5</fullName>
    </recommendedName>
    <alternativeName>
        <fullName evidence="2">30S ribosomal protein S5</fullName>
    </alternativeName>
</protein>
<keyword id="KW-0687">Ribonucleoprotein</keyword>
<keyword id="KW-0689">Ribosomal protein</keyword>
<keyword id="KW-0694">RNA-binding</keyword>
<keyword id="KW-0699">rRNA-binding</keyword>
<feature type="chain" id="PRO_1000085999" description="Small ribosomal subunit protein uS5">
    <location>
        <begin position="1"/>
        <end position="186"/>
    </location>
</feature>
<feature type="domain" description="S5 DRBM" evidence="1">
    <location>
        <begin position="20"/>
        <end position="83"/>
    </location>
</feature>
<organism>
    <name type="scientific">Brucella suis (strain ATCC 23445 / NCTC 10510)</name>
    <dbReference type="NCBI Taxonomy" id="470137"/>
    <lineage>
        <taxon>Bacteria</taxon>
        <taxon>Pseudomonadati</taxon>
        <taxon>Pseudomonadota</taxon>
        <taxon>Alphaproteobacteria</taxon>
        <taxon>Hyphomicrobiales</taxon>
        <taxon>Brucellaceae</taxon>
        <taxon>Brucella/Ochrobactrum group</taxon>
        <taxon>Brucella</taxon>
    </lineage>
</organism>
<dbReference type="EMBL" id="CP000911">
    <property type="protein sequence ID" value="ABY38316.1"/>
    <property type="molecule type" value="Genomic_DNA"/>
</dbReference>
<dbReference type="RefSeq" id="WP_002964345.1">
    <property type="nucleotide sequence ID" value="NC_010169.1"/>
</dbReference>
<dbReference type="SMR" id="B0CH15"/>
<dbReference type="GeneID" id="93016456"/>
<dbReference type="KEGG" id="bmt:BSUIS_A1265"/>
<dbReference type="HOGENOM" id="CLU_065898_2_2_5"/>
<dbReference type="Proteomes" id="UP000008545">
    <property type="component" value="Chromosome I"/>
</dbReference>
<dbReference type="GO" id="GO:0015935">
    <property type="term" value="C:small ribosomal subunit"/>
    <property type="evidence" value="ECO:0007669"/>
    <property type="project" value="InterPro"/>
</dbReference>
<dbReference type="GO" id="GO:0019843">
    <property type="term" value="F:rRNA binding"/>
    <property type="evidence" value="ECO:0007669"/>
    <property type="project" value="UniProtKB-UniRule"/>
</dbReference>
<dbReference type="GO" id="GO:0003735">
    <property type="term" value="F:structural constituent of ribosome"/>
    <property type="evidence" value="ECO:0007669"/>
    <property type="project" value="InterPro"/>
</dbReference>
<dbReference type="GO" id="GO:0006412">
    <property type="term" value="P:translation"/>
    <property type="evidence" value="ECO:0007669"/>
    <property type="project" value="UniProtKB-UniRule"/>
</dbReference>
<dbReference type="FunFam" id="3.30.160.20:FF:000001">
    <property type="entry name" value="30S ribosomal protein S5"/>
    <property type="match status" value="1"/>
</dbReference>
<dbReference type="FunFam" id="3.30.230.10:FF:000002">
    <property type="entry name" value="30S ribosomal protein S5"/>
    <property type="match status" value="1"/>
</dbReference>
<dbReference type="Gene3D" id="3.30.160.20">
    <property type="match status" value="1"/>
</dbReference>
<dbReference type="Gene3D" id="3.30.230.10">
    <property type="match status" value="1"/>
</dbReference>
<dbReference type="HAMAP" id="MF_01307_B">
    <property type="entry name" value="Ribosomal_uS5_B"/>
    <property type="match status" value="1"/>
</dbReference>
<dbReference type="InterPro" id="IPR020568">
    <property type="entry name" value="Ribosomal_Su5_D2-typ_SF"/>
</dbReference>
<dbReference type="InterPro" id="IPR000851">
    <property type="entry name" value="Ribosomal_uS5"/>
</dbReference>
<dbReference type="InterPro" id="IPR005712">
    <property type="entry name" value="Ribosomal_uS5_bac-type"/>
</dbReference>
<dbReference type="InterPro" id="IPR005324">
    <property type="entry name" value="Ribosomal_uS5_C"/>
</dbReference>
<dbReference type="InterPro" id="IPR013810">
    <property type="entry name" value="Ribosomal_uS5_N"/>
</dbReference>
<dbReference type="InterPro" id="IPR018192">
    <property type="entry name" value="Ribosomal_uS5_N_CS"/>
</dbReference>
<dbReference type="InterPro" id="IPR014721">
    <property type="entry name" value="Ribsml_uS5_D2-typ_fold_subgr"/>
</dbReference>
<dbReference type="NCBIfam" id="TIGR01021">
    <property type="entry name" value="rpsE_bact"/>
    <property type="match status" value="1"/>
</dbReference>
<dbReference type="PANTHER" id="PTHR48277">
    <property type="entry name" value="MITOCHONDRIAL RIBOSOMAL PROTEIN S5"/>
    <property type="match status" value="1"/>
</dbReference>
<dbReference type="PANTHER" id="PTHR48277:SF1">
    <property type="entry name" value="MITOCHONDRIAL RIBOSOMAL PROTEIN S5"/>
    <property type="match status" value="1"/>
</dbReference>
<dbReference type="Pfam" id="PF00333">
    <property type="entry name" value="Ribosomal_S5"/>
    <property type="match status" value="1"/>
</dbReference>
<dbReference type="Pfam" id="PF03719">
    <property type="entry name" value="Ribosomal_S5_C"/>
    <property type="match status" value="1"/>
</dbReference>
<dbReference type="SUPFAM" id="SSF54768">
    <property type="entry name" value="dsRNA-binding domain-like"/>
    <property type="match status" value="1"/>
</dbReference>
<dbReference type="SUPFAM" id="SSF54211">
    <property type="entry name" value="Ribosomal protein S5 domain 2-like"/>
    <property type="match status" value="1"/>
</dbReference>
<dbReference type="PROSITE" id="PS00585">
    <property type="entry name" value="RIBOSOMAL_S5"/>
    <property type="match status" value="1"/>
</dbReference>
<dbReference type="PROSITE" id="PS50881">
    <property type="entry name" value="S5_DSRBD"/>
    <property type="match status" value="1"/>
</dbReference>
<name>RS5_BRUSI</name>
<proteinExistence type="inferred from homology"/>
<comment type="function">
    <text evidence="1">With S4 and S12 plays an important role in translational accuracy.</text>
</comment>
<comment type="function">
    <text evidence="1">Located at the back of the 30S subunit body where it stabilizes the conformation of the head with respect to the body.</text>
</comment>
<comment type="subunit">
    <text evidence="1">Part of the 30S ribosomal subunit. Contacts proteins S4 and S8.</text>
</comment>
<comment type="domain">
    <text>The N-terminal domain interacts with the head of the 30S subunit; the C-terminal domain interacts with the body and contacts protein S4. The interaction surface between S4 and S5 is involved in control of translational fidelity.</text>
</comment>
<comment type="similarity">
    <text evidence="1">Belongs to the universal ribosomal protein uS5 family.</text>
</comment>
<evidence type="ECO:0000255" key="1">
    <source>
        <dbReference type="HAMAP-Rule" id="MF_01307"/>
    </source>
</evidence>
<evidence type="ECO:0000305" key="2"/>
<sequence>MAQRERNREERGREERDSEFVDKLVHINRVAKVVKGGRRFGFAALVVVGDQKGRVGFGHGKAREVPEAIRKATEAAKRDMIFVPLRSGRTLHHDVEGRHGAGKVLLRAAPAGKGIIAGGPMRAVFETLGVQDVVAKSLGSSNPYNMVRATFDALKHQMHPKDIAAQRGIKYSTLQARRHDVVGSEE</sequence>
<accession>B0CH15</accession>
<reference key="1">
    <citation type="submission" date="2007-12" db="EMBL/GenBank/DDBJ databases">
        <title>Brucella suis ATCC 23445 whole genome shotgun sequencing project.</title>
        <authorList>
            <person name="Setubal J.C."/>
            <person name="Bowns C."/>
            <person name="Boyle S."/>
            <person name="Crasta O.R."/>
            <person name="Czar M.J."/>
            <person name="Dharmanolla C."/>
            <person name="Gillespie J.J."/>
            <person name="Kenyon R.W."/>
            <person name="Lu J."/>
            <person name="Mane S."/>
            <person name="Mohapatra S."/>
            <person name="Nagrani S."/>
            <person name="Purkayastha A."/>
            <person name="Rajasimha H.K."/>
            <person name="Shallom J.M."/>
            <person name="Shallom S."/>
            <person name="Shukla M."/>
            <person name="Snyder E.E."/>
            <person name="Sobral B.W."/>
            <person name="Wattam A.R."/>
            <person name="Will R."/>
            <person name="Williams K."/>
            <person name="Yoo H."/>
            <person name="Bruce D."/>
            <person name="Detter C."/>
            <person name="Munk C."/>
            <person name="Brettin T.S."/>
        </authorList>
    </citation>
    <scope>NUCLEOTIDE SEQUENCE [LARGE SCALE GENOMIC DNA]</scope>
    <source>
        <strain>ATCC 23445 / NCTC 10510</strain>
    </source>
</reference>
<gene>
    <name evidence="1" type="primary">rpsE</name>
    <name type="ordered locus">BSUIS_A1265</name>
</gene>